<protein>
    <recommendedName>
        <fullName>Hemoglobin subunit beta-H0</fullName>
    </recommendedName>
    <alternativeName>
        <fullName>Beta-H0-globin</fullName>
    </alternativeName>
    <alternativeName>
        <fullName>Hemoglobin beta-H0 chain</fullName>
    </alternativeName>
</protein>
<keyword id="KW-0349">Heme</keyword>
<keyword id="KW-0408">Iron</keyword>
<keyword id="KW-0479">Metal-binding</keyword>
<keyword id="KW-0561">Oxygen transport</keyword>
<keyword id="KW-1185">Reference proteome</keyword>
<keyword id="KW-0813">Transport</keyword>
<organism>
    <name type="scientific">Mus musculus</name>
    <name type="common">Mouse</name>
    <dbReference type="NCBI Taxonomy" id="10090"/>
    <lineage>
        <taxon>Eukaryota</taxon>
        <taxon>Metazoa</taxon>
        <taxon>Chordata</taxon>
        <taxon>Craniata</taxon>
        <taxon>Vertebrata</taxon>
        <taxon>Euteleostomi</taxon>
        <taxon>Mammalia</taxon>
        <taxon>Eutheria</taxon>
        <taxon>Euarchontoglires</taxon>
        <taxon>Glires</taxon>
        <taxon>Rodentia</taxon>
        <taxon>Myomorpha</taxon>
        <taxon>Muroidea</taxon>
        <taxon>Muridae</taxon>
        <taxon>Murinae</taxon>
        <taxon>Mus</taxon>
        <taxon>Mus</taxon>
    </lineage>
</organism>
<feature type="chain" id="PRO_0000053022" description="Hemoglobin subunit beta-H0">
    <location>
        <begin position="1"/>
        <end position="147"/>
    </location>
</feature>
<feature type="domain" description="Globin" evidence="1">
    <location>
        <begin position="3"/>
        <end position="147"/>
    </location>
</feature>
<feature type="binding site" description="distal binding residue">
    <location>
        <position position="64"/>
    </location>
    <ligand>
        <name>heme b</name>
        <dbReference type="ChEBI" id="CHEBI:60344"/>
    </ligand>
    <ligandPart>
        <name>Fe</name>
        <dbReference type="ChEBI" id="CHEBI:18248"/>
    </ligandPart>
</feature>
<feature type="binding site" description="proximal binding residue">
    <location>
        <position position="93"/>
    </location>
    <ligand>
        <name>heme b</name>
        <dbReference type="ChEBI" id="CHEBI:60344"/>
    </ligand>
    <ligandPart>
        <name>Fe</name>
        <dbReference type="ChEBI" id="CHEBI:18248"/>
    </ligandPart>
</feature>
<feature type="sequence conflict" description="In Ref. 3; CAA24102." evidence="2" ref="3">
    <original>IKA</original>
    <variation>NKT</variation>
    <location>
        <begin position="61"/>
        <end position="63"/>
    </location>
</feature>
<feature type="sequence conflict" description="In Ref. 2; AAB59637." evidence="2" ref="2">
    <original>D</original>
    <variation>H</variation>
    <location>
        <position position="80"/>
    </location>
</feature>
<feature type="sequence conflict" description="In Ref. 3; CAA24102." evidence="2" ref="3">
    <original>D</original>
    <variation>N</variation>
    <location>
        <position position="80"/>
    </location>
</feature>
<feature type="sequence conflict" description="In Ref. 1; CAA32220." evidence="2" ref="1">
    <original>A</original>
    <variation>V</variation>
    <location>
        <position position="99"/>
    </location>
</feature>
<comment type="function">
    <text>This is a minor early embryonic beta chain.</text>
</comment>
<comment type="subunit">
    <text>Heterotetramer of two alpha chains and two beta chains.</text>
</comment>
<comment type="tissue specificity">
    <text>Red blood cells.</text>
</comment>
<comment type="similarity">
    <text evidence="1">Belongs to the globin family.</text>
</comment>
<name>HBB0_MOUSE</name>
<evidence type="ECO:0000255" key="1">
    <source>
        <dbReference type="PROSITE-ProRule" id="PRU00238"/>
    </source>
</evidence>
<evidence type="ECO:0000305" key="2"/>
<accession>P04443</accession>
<accession>Q61346</accession>
<sequence length="147" mass="16384">MVHFTAEEKAAITSIWDKVDLEKVGGETLGRLLIVYPWTQRFFDKFGNLSSAQAIMGNPRIKAHGKKVLTSLGLAVKNMDNLKETFAHLSELHCDKLHADPENFKLLGNMLVIVLSSYFGKEFTAEAQAAWQKLVVGVATALSHKYH</sequence>
<dbReference type="EMBL" id="X14061">
    <property type="protein sequence ID" value="CAA32220.1"/>
    <property type="molecule type" value="Genomic_DNA"/>
</dbReference>
<dbReference type="EMBL" id="J00416">
    <property type="protein sequence ID" value="AAB59637.1"/>
    <property type="molecule type" value="Genomic_DNA"/>
</dbReference>
<dbReference type="EMBL" id="V00723">
    <property type="protein sequence ID" value="CAA24102.1"/>
    <property type="molecule type" value="Genomic_DNA"/>
</dbReference>
<dbReference type="PIR" id="A02418">
    <property type="entry name" value="HBMSH0"/>
</dbReference>
<dbReference type="SMR" id="P04443"/>
<dbReference type="FunCoup" id="P04443">
    <property type="interactions" value="14"/>
</dbReference>
<dbReference type="iPTMnet" id="P04443"/>
<dbReference type="PhosphoSitePlus" id="P04443"/>
<dbReference type="jPOST" id="P04443"/>
<dbReference type="PeptideAtlas" id="P04443"/>
<dbReference type="ProteomicsDB" id="269720"/>
<dbReference type="AGR" id="MGI:96023"/>
<dbReference type="MGI" id="MGI:96023">
    <property type="gene designation" value="Hbb-bh0"/>
</dbReference>
<dbReference type="InParanoid" id="P04443"/>
<dbReference type="PhylomeDB" id="P04443"/>
<dbReference type="PRO" id="PR:P04443"/>
<dbReference type="Proteomes" id="UP000000589">
    <property type="component" value="Unplaced"/>
</dbReference>
<dbReference type="RNAct" id="P04443">
    <property type="molecule type" value="protein"/>
</dbReference>
<dbReference type="GO" id="GO:0005833">
    <property type="term" value="C:hemoglobin complex"/>
    <property type="evidence" value="ECO:0000314"/>
    <property type="project" value="MGI"/>
</dbReference>
<dbReference type="GO" id="GO:0020037">
    <property type="term" value="F:heme binding"/>
    <property type="evidence" value="ECO:0007669"/>
    <property type="project" value="InterPro"/>
</dbReference>
<dbReference type="GO" id="GO:0031721">
    <property type="term" value="F:hemoglobin alpha binding"/>
    <property type="evidence" value="ECO:0000314"/>
    <property type="project" value="MGI"/>
</dbReference>
<dbReference type="GO" id="GO:0046872">
    <property type="term" value="F:metal ion binding"/>
    <property type="evidence" value="ECO:0007669"/>
    <property type="project" value="UniProtKB-KW"/>
</dbReference>
<dbReference type="GO" id="GO:0019825">
    <property type="term" value="F:oxygen binding"/>
    <property type="evidence" value="ECO:0007669"/>
    <property type="project" value="InterPro"/>
</dbReference>
<dbReference type="GO" id="GO:0005344">
    <property type="term" value="F:oxygen carrier activity"/>
    <property type="evidence" value="ECO:0007669"/>
    <property type="project" value="UniProtKB-KW"/>
</dbReference>
<dbReference type="CDD" id="cd08925">
    <property type="entry name" value="Hb-beta-like"/>
    <property type="match status" value="1"/>
</dbReference>
<dbReference type="FunFam" id="1.10.490.10:FF:000001">
    <property type="entry name" value="Hemoglobin subunit beta"/>
    <property type="match status" value="1"/>
</dbReference>
<dbReference type="Gene3D" id="1.10.490.10">
    <property type="entry name" value="Globins"/>
    <property type="match status" value="1"/>
</dbReference>
<dbReference type="InterPro" id="IPR000971">
    <property type="entry name" value="Globin"/>
</dbReference>
<dbReference type="InterPro" id="IPR009050">
    <property type="entry name" value="Globin-like_sf"/>
</dbReference>
<dbReference type="InterPro" id="IPR012292">
    <property type="entry name" value="Globin/Proto"/>
</dbReference>
<dbReference type="InterPro" id="IPR002337">
    <property type="entry name" value="Hemoglobin_b"/>
</dbReference>
<dbReference type="InterPro" id="IPR050056">
    <property type="entry name" value="Hemoglobin_oxygen_transport"/>
</dbReference>
<dbReference type="PANTHER" id="PTHR11442">
    <property type="entry name" value="HEMOGLOBIN FAMILY MEMBER"/>
    <property type="match status" value="1"/>
</dbReference>
<dbReference type="PANTHER" id="PTHR11442:SF47">
    <property type="entry name" value="HEMOGLOBIN SUBUNIT BETA-H0"/>
    <property type="match status" value="1"/>
</dbReference>
<dbReference type="Pfam" id="PF00042">
    <property type="entry name" value="Globin"/>
    <property type="match status" value="1"/>
</dbReference>
<dbReference type="PRINTS" id="PR00814">
    <property type="entry name" value="BETAHAEM"/>
</dbReference>
<dbReference type="SUPFAM" id="SSF46458">
    <property type="entry name" value="Globin-like"/>
    <property type="match status" value="1"/>
</dbReference>
<dbReference type="PROSITE" id="PS01033">
    <property type="entry name" value="GLOBIN"/>
    <property type="match status" value="1"/>
</dbReference>
<gene>
    <name type="primary">Hbb-bh0</name>
</gene>
<reference key="1">
    <citation type="journal article" date="1989" name="J. Mol. Biol.">
        <title>Nucleotide sequence of the BALB/c mouse beta-globin complex.</title>
        <authorList>
            <person name="Shehee W.R."/>
            <person name="Loeb D.D."/>
            <person name="Adey N.B."/>
            <person name="Burton F.H."/>
            <person name="Casavant N.C."/>
            <person name="Cole P."/>
            <person name="Davies C.J."/>
            <person name="McGraw R.A."/>
            <person name="Schichman S.A."/>
            <person name="Severynse D.M."/>
            <person name="Voliva C.F."/>
            <person name="Weyter F.W."/>
            <person name="Wisely G.B."/>
            <person name="Edgell M.H."/>
            <person name="Hutchison C.A. III"/>
        </authorList>
    </citation>
    <scope>NUCLEOTIDE SEQUENCE [GENOMIC DNA]</scope>
</reference>
<reference key="2">
    <citation type="journal article" date="1984" name="J. Biol. Chem.">
        <title>Two mouse early embryonic beta-globin gene sequences. Evolution of the nonadult beta-globins.</title>
        <authorList>
            <person name="Hill A."/>
            <person name="Hardies S.C."/>
            <person name="Phillips S.J."/>
            <person name="Davis M.G."/>
            <person name="Hutchison C.A. III"/>
            <person name="Edgell M.H."/>
        </authorList>
    </citation>
    <scope>NUCLEOTIDE SEQUENCE [GENOMIC DNA]</scope>
</reference>
<reference key="3">
    <citation type="journal article" date="1980" name="Cell">
        <title>DNA sequence organization of the beta-globin complex in the BALB/c mouse.</title>
        <authorList>
            <person name="Jahn C.L."/>
            <person name="Hutchison C.A. III"/>
            <person name="Phillips S.J."/>
            <person name="Weaver S."/>
            <person name="Haigwood N.L."/>
            <person name="Voliva C.F."/>
            <person name="Edgell M.H."/>
        </authorList>
    </citation>
    <scope>NUCLEOTIDE SEQUENCE [GENOMIC DNA] OF 59-105</scope>
</reference>
<proteinExistence type="evidence at transcript level"/>